<keyword id="KW-0067">ATP-binding</keyword>
<keyword id="KW-0342">GTP-binding</keyword>
<keyword id="KW-0547">Nucleotide-binding</keyword>
<keyword id="KW-0694">RNA-binding</keyword>
<protein>
    <recommendedName>
        <fullName evidence="1">RNase adapter protein RapZ</fullName>
    </recommendedName>
</protein>
<reference key="1">
    <citation type="submission" date="2008-02" db="EMBL/GenBank/DDBJ databases">
        <title>Complete sequence of Escherichia coli C str. ATCC 8739.</title>
        <authorList>
            <person name="Copeland A."/>
            <person name="Lucas S."/>
            <person name="Lapidus A."/>
            <person name="Glavina del Rio T."/>
            <person name="Dalin E."/>
            <person name="Tice H."/>
            <person name="Bruce D."/>
            <person name="Goodwin L."/>
            <person name="Pitluck S."/>
            <person name="Kiss H."/>
            <person name="Brettin T."/>
            <person name="Detter J.C."/>
            <person name="Han C."/>
            <person name="Kuske C.R."/>
            <person name="Schmutz J."/>
            <person name="Larimer F."/>
            <person name="Land M."/>
            <person name="Hauser L."/>
            <person name="Kyrpides N."/>
            <person name="Mikhailova N."/>
            <person name="Ingram L."/>
            <person name="Richardson P."/>
        </authorList>
    </citation>
    <scope>NUCLEOTIDE SEQUENCE [LARGE SCALE GENOMIC DNA]</scope>
    <source>
        <strain>ATCC 8739 / DSM 1576 / NBRC 3972 / NCIMB 8545 / WDCM 00012 / Crooks</strain>
    </source>
</reference>
<accession>B1IQR8</accession>
<name>RAPZ_ECOLC</name>
<sequence>MVLMIVSGRSGSGKSVALRALEDMGFYCVDNLPVVLLPDLARTLADREISAAVSIDVRNMPESPEIFEQAMSNLPDAFSPQLLFLDADRNTLIRRYSDTRRLHPLSSKNLSLESAIDKESDLLEPLRSRADLIVDTSEMSVHELAEMLRTRLLGKRERELTMVFESFGFKHGIPIDADYVFDVRFLPNPHWDPKLRPMTGLDKPVAAFLDRHTEVHNFIYQTRSYLELWLPMLETNNRSYLTVAIGCTGGKHRSVYIAEQLADYFRSRGKNVQSRHRTLEKRKP</sequence>
<comment type="function">
    <text evidence="1">Modulates the synthesis of GlmS, by affecting the processing and stability of the regulatory small RNA GlmZ. When glucosamine-6-phosphate (GlcN6P) concentrations are high in the cell, RapZ binds GlmZ and targets it to cleavage by RNase E. Consequently, GlmZ is inactivated and unable to activate GlmS synthesis. Under low GlcN6P concentrations, RapZ is sequestered and inactivated by an other regulatory small RNA, GlmY, preventing GlmZ degradation and leading to synthesis of GlmS.</text>
</comment>
<comment type="subunit">
    <text evidence="1">Homotrimer.</text>
</comment>
<comment type="similarity">
    <text evidence="1">Belongs to the RapZ-like family. RapZ subfamily.</text>
</comment>
<dbReference type="EMBL" id="CP000946">
    <property type="protein sequence ID" value="ACA76172.1"/>
    <property type="molecule type" value="Genomic_DNA"/>
</dbReference>
<dbReference type="RefSeq" id="WP_000243741.1">
    <property type="nucleotide sequence ID" value="NZ_MTFT01000027.1"/>
</dbReference>
<dbReference type="SMR" id="B1IQR8"/>
<dbReference type="GeneID" id="93778776"/>
<dbReference type="KEGG" id="ecl:EcolC_0495"/>
<dbReference type="HOGENOM" id="CLU_059558_1_1_6"/>
<dbReference type="GO" id="GO:0005524">
    <property type="term" value="F:ATP binding"/>
    <property type="evidence" value="ECO:0007669"/>
    <property type="project" value="UniProtKB-UniRule"/>
</dbReference>
<dbReference type="GO" id="GO:0005525">
    <property type="term" value="F:GTP binding"/>
    <property type="evidence" value="ECO:0007669"/>
    <property type="project" value="UniProtKB-UniRule"/>
</dbReference>
<dbReference type="GO" id="GO:0003723">
    <property type="term" value="F:RNA binding"/>
    <property type="evidence" value="ECO:0007669"/>
    <property type="project" value="UniProtKB-KW"/>
</dbReference>
<dbReference type="Gene3D" id="3.40.50.300">
    <property type="entry name" value="P-loop containing nucleotide triphosphate hydrolases"/>
    <property type="match status" value="1"/>
</dbReference>
<dbReference type="HAMAP" id="MF_00636">
    <property type="entry name" value="RapZ_like"/>
    <property type="match status" value="1"/>
</dbReference>
<dbReference type="InterPro" id="IPR027417">
    <property type="entry name" value="P-loop_NTPase"/>
</dbReference>
<dbReference type="InterPro" id="IPR005337">
    <property type="entry name" value="RapZ-like"/>
</dbReference>
<dbReference type="InterPro" id="IPR053930">
    <property type="entry name" value="RapZ-like_N"/>
</dbReference>
<dbReference type="InterPro" id="IPR053931">
    <property type="entry name" value="RapZ_C"/>
</dbReference>
<dbReference type="NCBIfam" id="NF003828">
    <property type="entry name" value="PRK05416.1"/>
    <property type="match status" value="1"/>
</dbReference>
<dbReference type="PANTHER" id="PTHR30448">
    <property type="entry name" value="RNASE ADAPTER PROTEIN RAPZ"/>
    <property type="match status" value="1"/>
</dbReference>
<dbReference type="PANTHER" id="PTHR30448:SF0">
    <property type="entry name" value="RNASE ADAPTER PROTEIN RAPZ"/>
    <property type="match status" value="1"/>
</dbReference>
<dbReference type="Pfam" id="PF22740">
    <property type="entry name" value="PapZ_C"/>
    <property type="match status" value="1"/>
</dbReference>
<dbReference type="Pfam" id="PF03668">
    <property type="entry name" value="RapZ-like_N"/>
    <property type="match status" value="1"/>
</dbReference>
<dbReference type="PIRSF" id="PIRSF005052">
    <property type="entry name" value="P-loopkin"/>
    <property type="match status" value="1"/>
</dbReference>
<dbReference type="SUPFAM" id="SSF52540">
    <property type="entry name" value="P-loop containing nucleoside triphosphate hydrolases"/>
    <property type="match status" value="1"/>
</dbReference>
<proteinExistence type="inferred from homology"/>
<evidence type="ECO:0000255" key="1">
    <source>
        <dbReference type="HAMAP-Rule" id="MF_00636"/>
    </source>
</evidence>
<organism>
    <name type="scientific">Escherichia coli (strain ATCC 8739 / DSM 1576 / NBRC 3972 / NCIMB 8545 / WDCM 00012 / Crooks)</name>
    <dbReference type="NCBI Taxonomy" id="481805"/>
    <lineage>
        <taxon>Bacteria</taxon>
        <taxon>Pseudomonadati</taxon>
        <taxon>Pseudomonadota</taxon>
        <taxon>Gammaproteobacteria</taxon>
        <taxon>Enterobacterales</taxon>
        <taxon>Enterobacteriaceae</taxon>
        <taxon>Escherichia</taxon>
    </lineage>
</organism>
<feature type="chain" id="PRO_1000082658" description="RNase adapter protein RapZ">
    <location>
        <begin position="1"/>
        <end position="284"/>
    </location>
</feature>
<feature type="region of interest" description="RNA-binding" evidence="1">
    <location>
        <begin position="266"/>
        <end position="284"/>
    </location>
</feature>
<feature type="binding site" evidence="1">
    <location>
        <begin position="8"/>
        <end position="15"/>
    </location>
    <ligand>
        <name>ATP</name>
        <dbReference type="ChEBI" id="CHEBI:30616"/>
    </ligand>
</feature>
<feature type="binding site" evidence="1">
    <location>
        <begin position="56"/>
        <end position="59"/>
    </location>
    <ligand>
        <name>GTP</name>
        <dbReference type="ChEBI" id="CHEBI:37565"/>
    </ligand>
</feature>
<gene>
    <name evidence="1" type="primary">rapZ</name>
    <name type="ordered locus">EcolC_0495</name>
</gene>